<sequence length="322" mass="35718">MTIATDMHKEAAGLSTEALLRRVQALKKEMNAIILAHYYTLPEIQQAADIVGDSLALARAAEKTSADVIVFAGVYFMAETAKILNPGKMVLMPDPGAGCPLADSCPEEEFRAFRQAHPDAIAITYVNSSAAIKKLSDIICTSSNAEHIVRQIPPEQQIIFGPDRNLGAWVMKRTGRDMLLWQGFCYVHDAYSEVYMIQAKAMYPDAELIAHPECREEVLRQASFVGSTSALLDYTEKSPRKSFIVATEPGILYEMEKRSPGKVFIPAPKDPANPRSVCKQMKQNTLDKLYLCMVNRSPEITVDESLREGALKSIKRMLEMSA</sequence>
<keyword id="KW-0004">4Fe-4S</keyword>
<keyword id="KW-0963">Cytoplasm</keyword>
<keyword id="KW-0408">Iron</keyword>
<keyword id="KW-0411">Iron-sulfur</keyword>
<keyword id="KW-0479">Metal-binding</keyword>
<keyword id="KW-0662">Pyridine nucleotide biosynthesis</keyword>
<keyword id="KW-1185">Reference proteome</keyword>
<keyword id="KW-0808">Transferase</keyword>
<reference key="1">
    <citation type="journal article" date="2002" name="Proc. Natl. Acad. Sci. U.S.A.">
        <title>The complete genome sequence of Chlorobium tepidum TLS, a photosynthetic, anaerobic, green-sulfur bacterium.</title>
        <authorList>
            <person name="Eisen J.A."/>
            <person name="Nelson K.E."/>
            <person name="Paulsen I.T."/>
            <person name="Heidelberg J.F."/>
            <person name="Wu M."/>
            <person name="Dodson R.J."/>
            <person name="DeBoy R.T."/>
            <person name="Gwinn M.L."/>
            <person name="Nelson W.C."/>
            <person name="Haft D.H."/>
            <person name="Hickey E.K."/>
            <person name="Peterson J.D."/>
            <person name="Durkin A.S."/>
            <person name="Kolonay J.F."/>
            <person name="Yang F."/>
            <person name="Holt I.E."/>
            <person name="Umayam L.A."/>
            <person name="Mason T.M."/>
            <person name="Brenner M."/>
            <person name="Shea T.P."/>
            <person name="Parksey D.S."/>
            <person name="Nierman W.C."/>
            <person name="Feldblyum T.V."/>
            <person name="Hansen C.L."/>
            <person name="Craven M.B."/>
            <person name="Radune D."/>
            <person name="Vamathevan J.J."/>
            <person name="Khouri H.M."/>
            <person name="White O."/>
            <person name="Gruber T.M."/>
            <person name="Ketchum K.A."/>
            <person name="Venter J.C."/>
            <person name="Tettelin H."/>
            <person name="Bryant D.A."/>
            <person name="Fraser C.M."/>
        </authorList>
    </citation>
    <scope>NUCLEOTIDE SEQUENCE [LARGE SCALE GENOMIC DNA]</scope>
    <source>
        <strain>ATCC 49652 / DSM 12025 / NBRC 103806 / TLS</strain>
    </source>
</reference>
<organism>
    <name type="scientific">Chlorobaculum tepidum (strain ATCC 49652 / DSM 12025 / NBRC 103806 / TLS)</name>
    <name type="common">Chlorobium tepidum</name>
    <dbReference type="NCBI Taxonomy" id="194439"/>
    <lineage>
        <taxon>Bacteria</taxon>
        <taxon>Pseudomonadati</taxon>
        <taxon>Chlorobiota</taxon>
        <taxon>Chlorobiia</taxon>
        <taxon>Chlorobiales</taxon>
        <taxon>Chlorobiaceae</taxon>
        <taxon>Chlorobaculum</taxon>
    </lineage>
</organism>
<gene>
    <name evidence="1" type="primary">nadA</name>
    <name type="ordered locus">CT0570</name>
</gene>
<dbReference type="EC" id="2.5.1.72" evidence="1"/>
<dbReference type="EMBL" id="AE006470">
    <property type="protein sequence ID" value="AAM71812.1"/>
    <property type="molecule type" value="Genomic_DNA"/>
</dbReference>
<dbReference type="RefSeq" id="NP_661470.1">
    <property type="nucleotide sequence ID" value="NC_002932.3"/>
</dbReference>
<dbReference type="RefSeq" id="WP_010932257.1">
    <property type="nucleotide sequence ID" value="NC_002932.3"/>
</dbReference>
<dbReference type="SMR" id="Q8KEW2"/>
<dbReference type="STRING" id="194439.CT0570"/>
<dbReference type="EnsemblBacteria" id="AAM71812">
    <property type="protein sequence ID" value="AAM71812"/>
    <property type="gene ID" value="CT0570"/>
</dbReference>
<dbReference type="KEGG" id="cte:CT0570"/>
<dbReference type="PATRIC" id="fig|194439.7.peg.535"/>
<dbReference type="eggNOG" id="COG0379">
    <property type="taxonomic scope" value="Bacteria"/>
</dbReference>
<dbReference type="HOGENOM" id="CLU_047382_0_0_10"/>
<dbReference type="OrthoDB" id="9801204at2"/>
<dbReference type="UniPathway" id="UPA00253">
    <property type="reaction ID" value="UER00327"/>
</dbReference>
<dbReference type="Proteomes" id="UP000001007">
    <property type="component" value="Chromosome"/>
</dbReference>
<dbReference type="GO" id="GO:0005829">
    <property type="term" value="C:cytosol"/>
    <property type="evidence" value="ECO:0007669"/>
    <property type="project" value="TreeGrafter"/>
</dbReference>
<dbReference type="GO" id="GO:0051539">
    <property type="term" value="F:4 iron, 4 sulfur cluster binding"/>
    <property type="evidence" value="ECO:0007669"/>
    <property type="project" value="UniProtKB-KW"/>
</dbReference>
<dbReference type="GO" id="GO:0046872">
    <property type="term" value="F:metal ion binding"/>
    <property type="evidence" value="ECO:0007669"/>
    <property type="project" value="UniProtKB-KW"/>
</dbReference>
<dbReference type="GO" id="GO:0008987">
    <property type="term" value="F:quinolinate synthetase A activity"/>
    <property type="evidence" value="ECO:0007669"/>
    <property type="project" value="UniProtKB-UniRule"/>
</dbReference>
<dbReference type="GO" id="GO:0034628">
    <property type="term" value="P:'de novo' NAD biosynthetic process from L-aspartate"/>
    <property type="evidence" value="ECO:0007669"/>
    <property type="project" value="TreeGrafter"/>
</dbReference>
<dbReference type="FunFam" id="3.40.50.10800:FF:000003">
    <property type="entry name" value="Quinolinate synthase A"/>
    <property type="match status" value="1"/>
</dbReference>
<dbReference type="Gene3D" id="3.40.50.10800">
    <property type="entry name" value="NadA-like"/>
    <property type="match status" value="3"/>
</dbReference>
<dbReference type="HAMAP" id="MF_00568">
    <property type="entry name" value="NadA_type2"/>
    <property type="match status" value="1"/>
</dbReference>
<dbReference type="InterPro" id="IPR003473">
    <property type="entry name" value="NadA"/>
</dbReference>
<dbReference type="InterPro" id="IPR036094">
    <property type="entry name" value="NadA_sf"/>
</dbReference>
<dbReference type="InterPro" id="IPR023066">
    <property type="entry name" value="Quinolinate_synth_type2"/>
</dbReference>
<dbReference type="NCBIfam" id="TIGR00550">
    <property type="entry name" value="nadA"/>
    <property type="match status" value="1"/>
</dbReference>
<dbReference type="NCBIfam" id="NF006878">
    <property type="entry name" value="PRK09375.1-2"/>
    <property type="match status" value="1"/>
</dbReference>
<dbReference type="PANTHER" id="PTHR30573:SF0">
    <property type="entry name" value="QUINOLINATE SYNTHASE, CHLOROPLASTIC"/>
    <property type="match status" value="1"/>
</dbReference>
<dbReference type="PANTHER" id="PTHR30573">
    <property type="entry name" value="QUINOLINATE SYNTHETASE A"/>
    <property type="match status" value="1"/>
</dbReference>
<dbReference type="Pfam" id="PF02445">
    <property type="entry name" value="NadA"/>
    <property type="match status" value="1"/>
</dbReference>
<dbReference type="SUPFAM" id="SSF142754">
    <property type="entry name" value="NadA-like"/>
    <property type="match status" value="1"/>
</dbReference>
<proteinExistence type="inferred from homology"/>
<feature type="chain" id="PRO_0000155783" description="Quinolinate synthase">
    <location>
        <begin position="1"/>
        <end position="322"/>
    </location>
</feature>
<feature type="binding site" evidence="1">
    <location>
        <position position="37"/>
    </location>
    <ligand>
        <name>iminosuccinate</name>
        <dbReference type="ChEBI" id="CHEBI:77875"/>
    </ligand>
</feature>
<feature type="binding site" evidence="1">
    <location>
        <position position="54"/>
    </location>
    <ligand>
        <name>iminosuccinate</name>
        <dbReference type="ChEBI" id="CHEBI:77875"/>
    </ligand>
</feature>
<feature type="binding site" evidence="1">
    <location>
        <position position="99"/>
    </location>
    <ligand>
        <name>[4Fe-4S] cluster</name>
        <dbReference type="ChEBI" id="CHEBI:49883"/>
    </ligand>
</feature>
<feature type="binding site" evidence="1">
    <location>
        <begin position="125"/>
        <end position="127"/>
    </location>
    <ligand>
        <name>iminosuccinate</name>
        <dbReference type="ChEBI" id="CHEBI:77875"/>
    </ligand>
</feature>
<feature type="binding site" evidence="1">
    <location>
        <position position="142"/>
    </location>
    <ligand>
        <name>iminosuccinate</name>
        <dbReference type="ChEBI" id="CHEBI:77875"/>
    </ligand>
</feature>
<feature type="binding site" evidence="1">
    <location>
        <position position="185"/>
    </location>
    <ligand>
        <name>[4Fe-4S] cluster</name>
        <dbReference type="ChEBI" id="CHEBI:49883"/>
    </ligand>
</feature>
<feature type="binding site" evidence="1">
    <location>
        <begin position="211"/>
        <end position="213"/>
    </location>
    <ligand>
        <name>iminosuccinate</name>
        <dbReference type="ChEBI" id="CHEBI:77875"/>
    </ligand>
</feature>
<feature type="binding site" evidence="1">
    <location>
        <position position="228"/>
    </location>
    <ligand>
        <name>iminosuccinate</name>
        <dbReference type="ChEBI" id="CHEBI:77875"/>
    </ligand>
</feature>
<feature type="binding site" evidence="1">
    <location>
        <position position="278"/>
    </location>
    <ligand>
        <name>[4Fe-4S] cluster</name>
        <dbReference type="ChEBI" id="CHEBI:49883"/>
    </ligand>
</feature>
<evidence type="ECO:0000255" key="1">
    <source>
        <dbReference type="HAMAP-Rule" id="MF_00568"/>
    </source>
</evidence>
<name>NADA_CHLTE</name>
<accession>Q8KEW2</accession>
<comment type="function">
    <text evidence="1">Catalyzes the condensation of iminoaspartate with dihydroxyacetone phosphate to form quinolinate.</text>
</comment>
<comment type="catalytic activity">
    <reaction evidence="1">
        <text>iminosuccinate + dihydroxyacetone phosphate = quinolinate + phosphate + 2 H2O + H(+)</text>
        <dbReference type="Rhea" id="RHEA:25888"/>
        <dbReference type="ChEBI" id="CHEBI:15377"/>
        <dbReference type="ChEBI" id="CHEBI:15378"/>
        <dbReference type="ChEBI" id="CHEBI:29959"/>
        <dbReference type="ChEBI" id="CHEBI:43474"/>
        <dbReference type="ChEBI" id="CHEBI:57642"/>
        <dbReference type="ChEBI" id="CHEBI:77875"/>
        <dbReference type="EC" id="2.5.1.72"/>
    </reaction>
    <physiologicalReaction direction="left-to-right" evidence="1">
        <dbReference type="Rhea" id="RHEA:25889"/>
    </physiologicalReaction>
</comment>
<comment type="cofactor">
    <cofactor evidence="1">
        <name>[4Fe-4S] cluster</name>
        <dbReference type="ChEBI" id="CHEBI:49883"/>
    </cofactor>
    <text evidence="1">Binds 1 [4Fe-4S] cluster per subunit.</text>
</comment>
<comment type="pathway">
    <text evidence="1">Cofactor biosynthesis; NAD(+) biosynthesis; quinolinate from iminoaspartate: step 1/1.</text>
</comment>
<comment type="subcellular location">
    <subcellularLocation>
        <location evidence="1">Cytoplasm</location>
    </subcellularLocation>
</comment>
<comment type="similarity">
    <text evidence="1">Belongs to the quinolinate synthase family. Type 2 subfamily.</text>
</comment>
<protein>
    <recommendedName>
        <fullName evidence="1">Quinolinate synthase</fullName>
        <ecNumber evidence="1">2.5.1.72</ecNumber>
    </recommendedName>
</protein>